<proteinExistence type="predicted"/>
<keyword id="KW-1003">Cell membrane</keyword>
<keyword id="KW-0472">Membrane</keyword>
<keyword id="KW-1185">Reference proteome</keyword>
<keyword id="KW-0812">Transmembrane</keyword>
<keyword id="KW-1133">Transmembrane helix</keyword>
<name>Y2769_CORGL</name>
<gene>
    <name type="ordered locus">Cgl2769</name>
    <name type="ordered locus">cg3067</name>
</gene>
<accession>Q99340</accession>
<sequence>MAKKKLGTVARLSELDKSLRNRLLRVRSRLLFIVHSAIGAGVAYWIAVEVIKHGQPFFAPMSAVIILGLSGGDRIKRATELTLGCALGVGLGDLLIMQIGTGYWQIFVVVGLALLVASFVSPAPLVSNQMAIGGILIATMFPPGDGGSIDRMIDAFIGGGVGILVIALLPSSPLDAGRHQVANVLGIAASVLEDVAASLKAKDAAKLNNALEALRRSQASVNKLETAASSGKEATTVSPFLWGDRARVRSLYRILAPVDNVIRNARVLARRAVVLTEDNDTVSDEQIHVIEEIADIALRLSDLYEHHKEISEALEIPELVNRLRQLGSEVGEDIAEDRVLSAQVILAQSRSIIVDLLQICGMSRESAVAVLVPTSESPAYPPELWDDED</sequence>
<organism>
    <name type="scientific">Corynebacterium glutamicum (strain ATCC 13032 / DSM 20300 / JCM 1318 / BCRC 11384 / CCUG 27702 / LMG 3730 / NBRC 12168 / NCIMB 10025 / NRRL B-2784 / 534)</name>
    <dbReference type="NCBI Taxonomy" id="196627"/>
    <lineage>
        <taxon>Bacteria</taxon>
        <taxon>Bacillati</taxon>
        <taxon>Actinomycetota</taxon>
        <taxon>Actinomycetes</taxon>
        <taxon>Mycobacteriales</taxon>
        <taxon>Corynebacteriaceae</taxon>
        <taxon>Corynebacterium</taxon>
    </lineage>
</organism>
<protein>
    <recommendedName>
        <fullName>Uncharacterized protein Cgl2769/cg3067</fullName>
    </recommendedName>
</protein>
<evidence type="ECO:0000255" key="1"/>
<evidence type="ECO:0000305" key="2"/>
<reference key="1">
    <citation type="journal article" date="2003" name="Appl. Microbiol. Biotechnol.">
        <title>The Corynebacterium glutamicum genome: features and impacts on biotechnological processes.</title>
        <authorList>
            <person name="Ikeda M."/>
            <person name="Nakagawa S."/>
        </authorList>
    </citation>
    <scope>NUCLEOTIDE SEQUENCE [LARGE SCALE GENOMIC DNA]</scope>
    <source>
        <strain>ATCC 13032 / DSM 20300 / JCM 1318 / BCRC 11384 / CCUG 27702 / LMG 3730 / NBRC 12168 / NCIMB 10025 / NRRL B-2784 / 534</strain>
    </source>
</reference>
<reference key="2">
    <citation type="journal article" date="2003" name="J. Biotechnol.">
        <title>The complete Corynebacterium glutamicum ATCC 13032 genome sequence and its impact on the production of L-aspartate-derived amino acids and vitamins.</title>
        <authorList>
            <person name="Kalinowski J."/>
            <person name="Bathe B."/>
            <person name="Bartels D."/>
            <person name="Bischoff N."/>
            <person name="Bott M."/>
            <person name="Burkovski A."/>
            <person name="Dusch N."/>
            <person name="Eggeling L."/>
            <person name="Eikmanns B.J."/>
            <person name="Gaigalat L."/>
            <person name="Goesmann A."/>
            <person name="Hartmann M."/>
            <person name="Huthmacher K."/>
            <person name="Kraemer R."/>
            <person name="Linke B."/>
            <person name="McHardy A.C."/>
            <person name="Meyer F."/>
            <person name="Moeckel B."/>
            <person name="Pfefferle W."/>
            <person name="Puehler A."/>
            <person name="Rey D.A."/>
            <person name="Rueckert C."/>
            <person name="Rupp O."/>
            <person name="Sahm H."/>
            <person name="Wendisch V.F."/>
            <person name="Wiegraebe I."/>
            <person name="Tauch A."/>
        </authorList>
    </citation>
    <scope>NUCLEOTIDE SEQUENCE [LARGE SCALE GENOMIC DNA]</scope>
    <source>
        <strain>ATCC 13032 / DSM 20300 / JCM 1318 / BCRC 11384 / CCUG 27702 / LMG 3730 / NBRC 12168 / NCIMB 10025 / NRRL B-2784 / 534</strain>
    </source>
</reference>
<reference key="3">
    <citation type="journal article" date="1989" name="Mol. Microbiol.">
        <title>Molecular cloning, nucleotide sequence and fine-structural analysis of the Corynebacterium glutamicum fda gene: structural comparison of C. glutamicum fructose-1,6-biphosphate aldolase to class I and class II aldolases.</title>
        <authorList>
            <person name="von der Osten C.H."/>
            <person name="Barbas C.F. III"/>
            <person name="Wong C.-H."/>
            <person name="Sinskey A.J."/>
        </authorList>
    </citation>
    <scope>NUCLEOTIDE SEQUENCE [GENOMIC DNA] OF 1-359</scope>
    <source>
        <strain>ATCC 13059 / LMG 3658 / NCIB 10332 / AS019 / 613</strain>
    </source>
</reference>
<comment type="subcellular location">
    <subcellularLocation>
        <location evidence="2">Cell membrane</location>
        <topology evidence="2">Multi-pass membrane protein</topology>
    </subcellularLocation>
</comment>
<comment type="similarity">
    <text evidence="2">To M.tuberculosis Rv2571c.</text>
</comment>
<feature type="chain" id="PRO_0000214040" description="Uncharacterized protein Cgl2769/cg3067">
    <location>
        <begin position="1"/>
        <end position="389"/>
    </location>
</feature>
<feature type="transmembrane region" description="Helical" evidence="1">
    <location>
        <begin position="31"/>
        <end position="51"/>
    </location>
</feature>
<feature type="transmembrane region" description="Helical" evidence="1">
    <location>
        <begin position="96"/>
        <end position="116"/>
    </location>
</feature>
<feature type="transmembrane region" description="Helical" evidence="1">
    <location>
        <begin position="123"/>
        <end position="143"/>
    </location>
</feature>
<feature type="transmembrane region" description="Helical" evidence="1">
    <location>
        <begin position="152"/>
        <end position="172"/>
    </location>
</feature>
<dbReference type="EMBL" id="BA000036">
    <property type="protein sequence ID" value="BAC00163.1"/>
    <property type="molecule type" value="Genomic_DNA"/>
</dbReference>
<dbReference type="EMBL" id="BX927156">
    <property type="protein sequence ID" value="CAF20790.1"/>
    <property type="molecule type" value="Genomic_DNA"/>
</dbReference>
<dbReference type="EMBL" id="X17313">
    <property type="protein sequence ID" value="CAA35192.1"/>
    <property type="molecule type" value="Genomic_DNA"/>
</dbReference>
<dbReference type="RefSeq" id="NP_601963.1">
    <property type="nucleotide sequence ID" value="NC_003450.3"/>
</dbReference>
<dbReference type="RefSeq" id="WP_003853634.1">
    <property type="nucleotide sequence ID" value="NC_006958.1"/>
</dbReference>
<dbReference type="SMR" id="Q99340"/>
<dbReference type="STRING" id="196627.cg3067"/>
<dbReference type="KEGG" id="cgb:cg3067"/>
<dbReference type="KEGG" id="cgl:Cgl2769"/>
<dbReference type="PATRIC" id="fig|196627.13.peg.2700"/>
<dbReference type="eggNOG" id="COG4129">
    <property type="taxonomic scope" value="Bacteria"/>
</dbReference>
<dbReference type="HOGENOM" id="CLU_046662_0_0_11"/>
<dbReference type="OrthoDB" id="5198202at2"/>
<dbReference type="BioCyc" id="CORYNE:G18NG-12386-MONOMER"/>
<dbReference type="Proteomes" id="UP000000582">
    <property type="component" value="Chromosome"/>
</dbReference>
<dbReference type="Proteomes" id="UP000001009">
    <property type="component" value="Chromosome"/>
</dbReference>
<dbReference type="GO" id="GO:0005886">
    <property type="term" value="C:plasma membrane"/>
    <property type="evidence" value="ECO:0007669"/>
    <property type="project" value="UniProtKB-SubCell"/>
</dbReference>
<dbReference type="InterPro" id="IPR049453">
    <property type="entry name" value="Memb_transporter_dom"/>
</dbReference>
<dbReference type="Pfam" id="PF13515">
    <property type="entry name" value="FUSC_2"/>
    <property type="match status" value="1"/>
</dbReference>